<organism>
    <name type="scientific">Bacillus subtilis (strain 168)</name>
    <dbReference type="NCBI Taxonomy" id="224308"/>
    <lineage>
        <taxon>Bacteria</taxon>
        <taxon>Bacillati</taxon>
        <taxon>Bacillota</taxon>
        <taxon>Bacilli</taxon>
        <taxon>Bacillales</taxon>
        <taxon>Bacillaceae</taxon>
        <taxon>Bacillus</taxon>
    </lineage>
</organism>
<keyword id="KW-1003">Cell membrane</keyword>
<keyword id="KW-0472">Membrane</keyword>
<keyword id="KW-1185">Reference proteome</keyword>
<keyword id="KW-0812">Transmembrane</keyword>
<keyword id="KW-1133">Transmembrane helix</keyword>
<name>YNFC_BACSU</name>
<sequence length="136" mass="15374">MDWGIIIKIFSNIKGGGDHLKKVTILKASILFLAIASFHLFSIPHAFDIGHHYKAVADQQEMHEMKAGQNADDEKKSITGAFTLTALWAMAVLLLTAESKSTGYSRRRQRKKSFILAKFYQSSYFGKLHVQHHPIM</sequence>
<proteinExistence type="predicted"/>
<evidence type="ECO:0000255" key="1"/>
<evidence type="ECO:0000305" key="2"/>
<protein>
    <recommendedName>
        <fullName>Uncharacterized protein YnfC</fullName>
    </recommendedName>
</protein>
<feature type="chain" id="PRO_0000049641" description="Uncharacterized protein YnfC">
    <location>
        <begin position="1"/>
        <end position="136"/>
    </location>
</feature>
<feature type="transmembrane region" description="Helical" evidence="1">
    <location>
        <begin position="25"/>
        <end position="47"/>
    </location>
</feature>
<feature type="transmembrane region" description="Helical" evidence="1">
    <location>
        <begin position="78"/>
        <end position="97"/>
    </location>
</feature>
<reference key="1">
    <citation type="journal article" date="1996" name="Microbiology">
        <title>New genes in the 170 degrees region of the Bacillus subtilis genome encode DNA gyrase subunits, a thioredoxin, a xylanase and an amino acid transporter.</title>
        <authorList>
            <person name="Rose M."/>
            <person name="Entian K.-D."/>
        </authorList>
    </citation>
    <scope>NUCLEOTIDE SEQUENCE [GENOMIC DNA]</scope>
    <source>
        <strain>168</strain>
    </source>
</reference>
<reference key="2">
    <citation type="journal article" date="1997" name="Nature">
        <title>The complete genome sequence of the Gram-positive bacterium Bacillus subtilis.</title>
        <authorList>
            <person name="Kunst F."/>
            <person name="Ogasawara N."/>
            <person name="Moszer I."/>
            <person name="Albertini A.M."/>
            <person name="Alloni G."/>
            <person name="Azevedo V."/>
            <person name="Bertero M.G."/>
            <person name="Bessieres P."/>
            <person name="Bolotin A."/>
            <person name="Borchert S."/>
            <person name="Borriss R."/>
            <person name="Boursier L."/>
            <person name="Brans A."/>
            <person name="Braun M."/>
            <person name="Brignell S.C."/>
            <person name="Bron S."/>
            <person name="Brouillet S."/>
            <person name="Bruschi C.V."/>
            <person name="Caldwell B."/>
            <person name="Capuano V."/>
            <person name="Carter N.M."/>
            <person name="Choi S.-K."/>
            <person name="Codani J.-J."/>
            <person name="Connerton I.F."/>
            <person name="Cummings N.J."/>
            <person name="Daniel R.A."/>
            <person name="Denizot F."/>
            <person name="Devine K.M."/>
            <person name="Duesterhoeft A."/>
            <person name="Ehrlich S.D."/>
            <person name="Emmerson P.T."/>
            <person name="Entian K.-D."/>
            <person name="Errington J."/>
            <person name="Fabret C."/>
            <person name="Ferrari E."/>
            <person name="Foulger D."/>
            <person name="Fritz C."/>
            <person name="Fujita M."/>
            <person name="Fujita Y."/>
            <person name="Fuma S."/>
            <person name="Galizzi A."/>
            <person name="Galleron N."/>
            <person name="Ghim S.-Y."/>
            <person name="Glaser P."/>
            <person name="Goffeau A."/>
            <person name="Golightly E.J."/>
            <person name="Grandi G."/>
            <person name="Guiseppi G."/>
            <person name="Guy B.J."/>
            <person name="Haga K."/>
            <person name="Haiech J."/>
            <person name="Harwood C.R."/>
            <person name="Henaut A."/>
            <person name="Hilbert H."/>
            <person name="Holsappel S."/>
            <person name="Hosono S."/>
            <person name="Hullo M.-F."/>
            <person name="Itaya M."/>
            <person name="Jones L.-M."/>
            <person name="Joris B."/>
            <person name="Karamata D."/>
            <person name="Kasahara Y."/>
            <person name="Klaerr-Blanchard M."/>
            <person name="Klein C."/>
            <person name="Kobayashi Y."/>
            <person name="Koetter P."/>
            <person name="Koningstein G."/>
            <person name="Krogh S."/>
            <person name="Kumano M."/>
            <person name="Kurita K."/>
            <person name="Lapidus A."/>
            <person name="Lardinois S."/>
            <person name="Lauber J."/>
            <person name="Lazarevic V."/>
            <person name="Lee S.-M."/>
            <person name="Levine A."/>
            <person name="Liu H."/>
            <person name="Masuda S."/>
            <person name="Mauel C."/>
            <person name="Medigue C."/>
            <person name="Medina N."/>
            <person name="Mellado R.P."/>
            <person name="Mizuno M."/>
            <person name="Moestl D."/>
            <person name="Nakai S."/>
            <person name="Noback M."/>
            <person name="Noone D."/>
            <person name="O'Reilly M."/>
            <person name="Ogawa K."/>
            <person name="Ogiwara A."/>
            <person name="Oudega B."/>
            <person name="Park S.-H."/>
            <person name="Parro V."/>
            <person name="Pohl T.M."/>
            <person name="Portetelle D."/>
            <person name="Porwollik S."/>
            <person name="Prescott A.M."/>
            <person name="Presecan E."/>
            <person name="Pujic P."/>
            <person name="Purnelle B."/>
            <person name="Rapoport G."/>
            <person name="Rey M."/>
            <person name="Reynolds S."/>
            <person name="Rieger M."/>
            <person name="Rivolta C."/>
            <person name="Rocha E."/>
            <person name="Roche B."/>
            <person name="Rose M."/>
            <person name="Sadaie Y."/>
            <person name="Sato T."/>
            <person name="Scanlan E."/>
            <person name="Schleich S."/>
            <person name="Schroeter R."/>
            <person name="Scoffone F."/>
            <person name="Sekiguchi J."/>
            <person name="Sekowska A."/>
            <person name="Seror S.J."/>
            <person name="Serror P."/>
            <person name="Shin B.-S."/>
            <person name="Soldo B."/>
            <person name="Sorokin A."/>
            <person name="Tacconi E."/>
            <person name="Takagi T."/>
            <person name="Takahashi H."/>
            <person name="Takemaru K."/>
            <person name="Takeuchi M."/>
            <person name="Tamakoshi A."/>
            <person name="Tanaka T."/>
            <person name="Terpstra P."/>
            <person name="Tognoni A."/>
            <person name="Tosato V."/>
            <person name="Uchiyama S."/>
            <person name="Vandenbol M."/>
            <person name="Vannier F."/>
            <person name="Vassarotti A."/>
            <person name="Viari A."/>
            <person name="Wambutt R."/>
            <person name="Wedler E."/>
            <person name="Wedler H."/>
            <person name="Weitzenegger T."/>
            <person name="Winters P."/>
            <person name="Wipat A."/>
            <person name="Yamamoto H."/>
            <person name="Yamane K."/>
            <person name="Yasumoto K."/>
            <person name="Yata K."/>
            <person name="Yoshida K."/>
            <person name="Yoshikawa H.-F."/>
            <person name="Zumstein E."/>
            <person name="Yoshikawa H."/>
            <person name="Danchin A."/>
        </authorList>
    </citation>
    <scope>NUCLEOTIDE SEQUENCE [LARGE SCALE GENOMIC DNA]</scope>
    <source>
        <strain>168</strain>
    </source>
</reference>
<comment type="subcellular location">
    <subcellularLocation>
        <location evidence="2">Cell membrane</location>
        <topology evidence="2">Multi-pass membrane protein</topology>
    </subcellularLocation>
</comment>
<accession>Q45067</accession>
<dbReference type="EMBL" id="Z73234">
    <property type="protein sequence ID" value="CAA97608.1"/>
    <property type="molecule type" value="Genomic_DNA"/>
</dbReference>
<dbReference type="EMBL" id="AL009126">
    <property type="protein sequence ID" value="CAB13694.1"/>
    <property type="molecule type" value="Genomic_DNA"/>
</dbReference>
<dbReference type="PIR" id="C69892">
    <property type="entry name" value="C69892"/>
</dbReference>
<dbReference type="RefSeq" id="NP_389693.1">
    <property type="nucleotide sequence ID" value="NC_000964.3"/>
</dbReference>
<dbReference type="FunCoup" id="Q45067">
    <property type="interactions" value="12"/>
</dbReference>
<dbReference type="STRING" id="224308.BSU18110"/>
<dbReference type="PaxDb" id="224308-BSU18110"/>
<dbReference type="KEGG" id="bsu:BSU18110"/>
<dbReference type="PATRIC" id="fig|224308.43.peg.1919"/>
<dbReference type="eggNOG" id="ENOG50307UE">
    <property type="taxonomic scope" value="Bacteria"/>
</dbReference>
<dbReference type="InParanoid" id="Q45067"/>
<dbReference type="BioCyc" id="BSUB:BSU18110-MONOMER"/>
<dbReference type="Proteomes" id="UP000001570">
    <property type="component" value="Chromosome"/>
</dbReference>
<dbReference type="GO" id="GO:0005886">
    <property type="term" value="C:plasma membrane"/>
    <property type="evidence" value="ECO:0007669"/>
    <property type="project" value="UniProtKB-SubCell"/>
</dbReference>
<gene>
    <name type="primary">ynfC</name>
    <name type="ordered locus">BSU18110</name>
</gene>